<accession>Q8EK56</accession>
<keyword id="KW-1185">Reference proteome</keyword>
<keyword id="KW-0687">Ribonucleoprotein</keyword>
<keyword id="KW-0689">Ribosomal protein</keyword>
<keyword id="KW-0694">RNA-binding</keyword>
<keyword id="KW-0699">rRNA-binding</keyword>
<feature type="chain" id="PRO_1000128577" description="Small ribosomal subunit protein uS14">
    <location>
        <begin position="1"/>
        <end position="101"/>
    </location>
</feature>
<sequence length="101" mass="11362">MAKTSMKAREAKRAQLVAKFAEKRAALKVIIASPASSDEDRWDAVLKLQALPRDSSASRQRNRCNQTGRPHGFLRKFGLSRIKLREATMRGEVPGLRKASW</sequence>
<organism>
    <name type="scientific">Shewanella oneidensis (strain ATCC 700550 / JCM 31522 / CIP 106686 / LMG 19005 / NCIMB 14063 / MR-1)</name>
    <dbReference type="NCBI Taxonomy" id="211586"/>
    <lineage>
        <taxon>Bacteria</taxon>
        <taxon>Pseudomonadati</taxon>
        <taxon>Pseudomonadota</taxon>
        <taxon>Gammaproteobacteria</taxon>
        <taxon>Alteromonadales</taxon>
        <taxon>Shewanellaceae</taxon>
        <taxon>Shewanella</taxon>
    </lineage>
</organism>
<protein>
    <recommendedName>
        <fullName evidence="1">Small ribosomal subunit protein uS14</fullName>
    </recommendedName>
    <alternativeName>
        <fullName evidence="2">30S ribosomal protein S14</fullName>
    </alternativeName>
</protein>
<dbReference type="EMBL" id="AE014299">
    <property type="protein sequence ID" value="AAN53329.1"/>
    <property type="molecule type" value="Genomic_DNA"/>
</dbReference>
<dbReference type="RefSeq" id="NP_715884.1">
    <property type="nucleotide sequence ID" value="NC_004347.2"/>
</dbReference>
<dbReference type="RefSeq" id="WP_011070625.1">
    <property type="nucleotide sequence ID" value="NZ_CP053946.1"/>
</dbReference>
<dbReference type="SMR" id="Q8EK56"/>
<dbReference type="STRING" id="211586.SO_0244"/>
<dbReference type="PaxDb" id="211586-SO_0244"/>
<dbReference type="GeneID" id="75190605"/>
<dbReference type="KEGG" id="son:SO_0244"/>
<dbReference type="PATRIC" id="fig|211586.12.peg.232"/>
<dbReference type="eggNOG" id="COG0199">
    <property type="taxonomic scope" value="Bacteria"/>
</dbReference>
<dbReference type="HOGENOM" id="CLU_139869_0_1_6"/>
<dbReference type="OrthoDB" id="9810484at2"/>
<dbReference type="PhylomeDB" id="Q8EK56"/>
<dbReference type="BioCyc" id="SONE211586:G1GMP-233-MONOMER"/>
<dbReference type="Proteomes" id="UP000008186">
    <property type="component" value="Chromosome"/>
</dbReference>
<dbReference type="GO" id="GO:0005737">
    <property type="term" value="C:cytoplasm"/>
    <property type="evidence" value="ECO:0007669"/>
    <property type="project" value="UniProtKB-ARBA"/>
</dbReference>
<dbReference type="GO" id="GO:0015935">
    <property type="term" value="C:small ribosomal subunit"/>
    <property type="evidence" value="ECO:0000318"/>
    <property type="project" value="GO_Central"/>
</dbReference>
<dbReference type="GO" id="GO:0019843">
    <property type="term" value="F:rRNA binding"/>
    <property type="evidence" value="ECO:0007669"/>
    <property type="project" value="UniProtKB-UniRule"/>
</dbReference>
<dbReference type="GO" id="GO:0003735">
    <property type="term" value="F:structural constituent of ribosome"/>
    <property type="evidence" value="ECO:0000318"/>
    <property type="project" value="GO_Central"/>
</dbReference>
<dbReference type="GO" id="GO:0006412">
    <property type="term" value="P:translation"/>
    <property type="evidence" value="ECO:0000318"/>
    <property type="project" value="GO_Central"/>
</dbReference>
<dbReference type="FunFam" id="1.10.287.1480:FF:000001">
    <property type="entry name" value="30S ribosomal protein S14"/>
    <property type="match status" value="1"/>
</dbReference>
<dbReference type="Gene3D" id="1.10.287.1480">
    <property type="match status" value="1"/>
</dbReference>
<dbReference type="HAMAP" id="MF_00537">
    <property type="entry name" value="Ribosomal_uS14_1"/>
    <property type="match status" value="1"/>
</dbReference>
<dbReference type="InterPro" id="IPR001209">
    <property type="entry name" value="Ribosomal_uS14"/>
</dbReference>
<dbReference type="InterPro" id="IPR023036">
    <property type="entry name" value="Ribosomal_uS14_bac/plastid"/>
</dbReference>
<dbReference type="InterPro" id="IPR018271">
    <property type="entry name" value="Ribosomal_uS14_CS"/>
</dbReference>
<dbReference type="NCBIfam" id="NF006477">
    <property type="entry name" value="PRK08881.1"/>
    <property type="match status" value="1"/>
</dbReference>
<dbReference type="PANTHER" id="PTHR19836">
    <property type="entry name" value="30S RIBOSOMAL PROTEIN S14"/>
    <property type="match status" value="1"/>
</dbReference>
<dbReference type="PANTHER" id="PTHR19836:SF19">
    <property type="entry name" value="SMALL RIBOSOMAL SUBUNIT PROTEIN US14M"/>
    <property type="match status" value="1"/>
</dbReference>
<dbReference type="Pfam" id="PF00253">
    <property type="entry name" value="Ribosomal_S14"/>
    <property type="match status" value="1"/>
</dbReference>
<dbReference type="SUPFAM" id="SSF57716">
    <property type="entry name" value="Glucocorticoid receptor-like (DNA-binding domain)"/>
    <property type="match status" value="1"/>
</dbReference>
<dbReference type="PROSITE" id="PS00527">
    <property type="entry name" value="RIBOSOMAL_S14"/>
    <property type="match status" value="1"/>
</dbReference>
<proteinExistence type="inferred from homology"/>
<gene>
    <name evidence="1" type="primary">rpsN</name>
    <name type="ordered locus">SO_0244</name>
</gene>
<reference key="1">
    <citation type="journal article" date="2002" name="Nat. Biotechnol.">
        <title>Genome sequence of the dissimilatory metal ion-reducing bacterium Shewanella oneidensis.</title>
        <authorList>
            <person name="Heidelberg J.F."/>
            <person name="Paulsen I.T."/>
            <person name="Nelson K.E."/>
            <person name="Gaidos E.J."/>
            <person name="Nelson W.C."/>
            <person name="Read T.D."/>
            <person name="Eisen J.A."/>
            <person name="Seshadri R."/>
            <person name="Ward N.L."/>
            <person name="Methe B.A."/>
            <person name="Clayton R.A."/>
            <person name="Meyer T."/>
            <person name="Tsapin A."/>
            <person name="Scott J."/>
            <person name="Beanan M.J."/>
            <person name="Brinkac L.M."/>
            <person name="Daugherty S.C."/>
            <person name="DeBoy R.T."/>
            <person name="Dodson R.J."/>
            <person name="Durkin A.S."/>
            <person name="Haft D.H."/>
            <person name="Kolonay J.F."/>
            <person name="Madupu R."/>
            <person name="Peterson J.D."/>
            <person name="Umayam L.A."/>
            <person name="White O."/>
            <person name="Wolf A.M."/>
            <person name="Vamathevan J.J."/>
            <person name="Weidman J.F."/>
            <person name="Impraim M."/>
            <person name="Lee K."/>
            <person name="Berry K.J."/>
            <person name="Lee C."/>
            <person name="Mueller J."/>
            <person name="Khouri H.M."/>
            <person name="Gill J."/>
            <person name="Utterback T.R."/>
            <person name="McDonald L.A."/>
            <person name="Feldblyum T.V."/>
            <person name="Smith H.O."/>
            <person name="Venter J.C."/>
            <person name="Nealson K.H."/>
            <person name="Fraser C.M."/>
        </authorList>
    </citation>
    <scope>NUCLEOTIDE SEQUENCE [LARGE SCALE GENOMIC DNA]</scope>
    <source>
        <strain>ATCC 700550 / JCM 31522 / CIP 106686 / LMG 19005 / NCIMB 14063 / MR-1</strain>
    </source>
</reference>
<name>RS14_SHEON</name>
<comment type="function">
    <text evidence="1">Binds 16S rRNA, required for the assembly of 30S particles and may also be responsible for determining the conformation of the 16S rRNA at the A site.</text>
</comment>
<comment type="subunit">
    <text evidence="1">Part of the 30S ribosomal subunit. Contacts proteins S3 and S10.</text>
</comment>
<comment type="similarity">
    <text evidence="1">Belongs to the universal ribosomal protein uS14 family.</text>
</comment>
<evidence type="ECO:0000255" key="1">
    <source>
        <dbReference type="HAMAP-Rule" id="MF_00537"/>
    </source>
</evidence>
<evidence type="ECO:0000305" key="2"/>